<organismHost>
    <name type="scientific">Escherichia coli</name>
    <dbReference type="NCBI Taxonomy" id="562"/>
</organismHost>
<gene>
    <name type="primary">uvsY</name>
</gene>
<protein>
    <recommendedName>
        <fullName>Recombination protein uvsY</fullName>
    </recommendedName>
</protein>
<evidence type="ECO:0000269" key="1">
    <source>
    </source>
</evidence>
<evidence type="ECO:0000269" key="2">
    <source>
    </source>
</evidence>
<evidence type="ECO:0000269" key="3">
    <source>
    </source>
</evidence>
<evidence type="ECO:0000269" key="4">
    <source>
    </source>
</evidence>
<evidence type="ECO:0000305" key="5"/>
<evidence type="ECO:0007829" key="6">
    <source>
        <dbReference type="PDB" id="4ZWQ"/>
    </source>
</evidence>
<name>UVSY_BPT4</name>
<sequence>MRLEDLQEELKKDVFIDSTKLQYEAANNVMLYSKWLNKHSSIKKEMLRIEAQKKVALKARLDYYSGRGDGDEFSMDRYEKSEMKTVLSADKDVLKVDTSLQYWGILLDFCSGALDAIKSRGFAIKHIQDMRAFEAGK</sequence>
<reference key="1">
    <citation type="journal article" date="1991" name="Virology">
        <title>Two bacteriophage T4 base plate genes (25 and 26) and the DNA repair gene uvsY belong to spatially and temporally overlapping transcription units.</title>
        <authorList>
            <person name="Gruidl M.E."/>
            <person name="Chen T.C."/>
            <person name="Gargano S."/>
            <person name="Storlazzi A."/>
            <person name="Cascino A."/>
            <person name="Mosig G."/>
        </authorList>
    </citation>
    <scope>NUCLEOTIDE SEQUENCE [GENOMIC DNA]</scope>
</reference>
<reference key="2">
    <citation type="journal article" date="1988" name="Nucleic Acids Res.">
        <title>Confirmation of the reading frame of bacteriophage T4 uvsY gene.</title>
        <authorList>
            <person name="Kobayashi M."/>
            <person name="Saito H."/>
            <person name="Takahashi H."/>
        </authorList>
    </citation>
    <scope>NUCLEOTIDE SEQUENCE [GENOMIC DNA]</scope>
</reference>
<reference key="3">
    <citation type="journal article" date="1985" name="Virology">
        <title>Nucleotide sequence of bacteriophage T4 uvsY gene.</title>
        <authorList>
            <person name="Takahashi H."/>
            <person name="Kobayashi M."/>
            <person name="Noguchi T."/>
            <person name="Saito H."/>
        </authorList>
    </citation>
    <scope>NUCLEOTIDE SEQUENCE [GENOMIC DNA]</scope>
</reference>
<reference key="4">
    <citation type="journal article" date="1986" name="Genetics">
        <title>Sequence and transcripts of the bacteriophage T4 DNA repair gene uvsY.</title>
        <authorList>
            <person name="Gruidl M.E."/>
            <person name="Mosig G."/>
        </authorList>
    </citation>
    <scope>NUCLEOTIDE SEQUENCE [GENOMIC DNA]</scope>
</reference>
<reference key="5">
    <citation type="journal article" date="2003" name="Microbiol. Mol. Biol. Rev.">
        <title>Bacteriophage T4 genome.</title>
        <authorList>
            <person name="Miller E.S."/>
            <person name="Kutter E."/>
            <person name="Mosig G."/>
            <person name="Arisaka F."/>
            <person name="Kunisawa T."/>
            <person name="Ruger W."/>
        </authorList>
    </citation>
    <scope>NUCLEOTIDE SEQUENCE [LARGE SCALE GENOMIC DNA]</scope>
</reference>
<reference key="6">
    <citation type="journal article" date="1999" name="Biochemistry">
        <title>Biochemical interactions within a ternary complex of the bacteriophage T4 recombination proteins uvsY and gp32 bound to single-stranded DNA.</title>
        <authorList>
            <person name="Sweezy M.A."/>
            <person name="Morrical S.W."/>
        </authorList>
    </citation>
    <scope>INTERACTION WITH GP32</scope>
</reference>
<reference key="7">
    <citation type="journal article" date="1998" name="Biochemistry">
        <title>The uvsY recombination protein of bacteriophage T4 forms hexamers in the presence and absence of single-stranded DNA.</title>
        <authorList>
            <person name="Beernink H.T."/>
            <person name="Morrical S.W."/>
        </authorList>
    </citation>
    <scope>SUBUNIT</scope>
</reference>
<reference key="8">
    <citation type="journal article" date="2008" name="J. Mol. Biol.">
        <title>Modulation of T4 gene 32 protein DNA binding activity by the recombination mediator protein UvsY.</title>
        <authorList>
            <person name="Pant K."/>
            <person name="Shokri L."/>
            <person name="Karpel R.L."/>
            <person name="Morrical S.W."/>
            <person name="Williams M.C."/>
        </authorList>
    </citation>
    <scope>FUNCTION</scope>
</reference>
<reference key="9">
    <citation type="journal article" date="2010" name="Nucleic Acids Res.">
        <title>DNA-binding properties of T4 UvsY recombination mediator protein: polynucleotide wrapping promotes high-affinity binding to single-stranded DNA.</title>
        <authorList>
            <person name="Xu H."/>
            <person name="Beernink H.T."/>
            <person name="Morrical S.W."/>
        </authorList>
    </citation>
    <scope>SUBUNIT</scope>
    <scope>DNA-BINDING</scope>
    <scope>FUNCTION</scope>
</reference>
<proteinExistence type="evidence at protein level"/>
<dbReference type="EMBL" id="M77695">
    <property type="protein sequence ID" value="AAA32550.1"/>
    <property type="molecule type" value="Genomic_DNA"/>
</dbReference>
<dbReference type="EMBL" id="M11495">
    <property type="protein sequence ID" value="AAA32546.1"/>
    <property type="status" value="ALT_SEQ"/>
    <property type="molecule type" value="Genomic_DNA"/>
</dbReference>
<dbReference type="EMBL" id="X05134">
    <property type="protein sequence ID" value="CAA28779.1"/>
    <property type="molecule type" value="Genomic_DNA"/>
</dbReference>
<dbReference type="EMBL" id="X04856">
    <property type="protein sequence ID" value="CAA28549.1"/>
    <property type="molecule type" value="Genomic_DNA"/>
</dbReference>
<dbReference type="EMBL" id="AF158101">
    <property type="protein sequence ID" value="AAD42670.2"/>
    <property type="molecule type" value="Genomic_DNA"/>
</dbReference>
<dbReference type="PIR" id="JS0136">
    <property type="entry name" value="ZXBPT4"/>
</dbReference>
<dbReference type="RefSeq" id="NP_049799.2">
    <property type="nucleotide sequence ID" value="NC_000866.4"/>
</dbReference>
<dbReference type="PDB" id="4ZWQ">
    <property type="method" value="X-ray"/>
    <property type="resolution" value="2.35 A"/>
    <property type="chains" value="A/B/C/D/E/F/G=1-137"/>
</dbReference>
<dbReference type="PDB" id="4ZWR">
    <property type="method" value="X-ray"/>
    <property type="resolution" value="3.39 A"/>
    <property type="chains" value="A/B/C/D/E/F/G=2-137"/>
</dbReference>
<dbReference type="PDB" id="4ZWS">
    <property type="method" value="X-ray"/>
    <property type="resolution" value="2.60 A"/>
    <property type="chains" value="A/B/C/D/E/F/G=1-137"/>
</dbReference>
<dbReference type="PDB" id="4ZWT">
    <property type="method" value="X-ray"/>
    <property type="resolution" value="4.20 A"/>
    <property type="chains" value="A/B/C/D/E/F/G/H/I/J/K/L/M/N=1-137"/>
</dbReference>
<dbReference type="PDBsum" id="4ZWQ"/>
<dbReference type="PDBsum" id="4ZWR"/>
<dbReference type="PDBsum" id="4ZWS"/>
<dbReference type="PDBsum" id="4ZWT"/>
<dbReference type="SMR" id="P04537"/>
<dbReference type="GeneID" id="1258547"/>
<dbReference type="KEGG" id="vg:1258547"/>
<dbReference type="OrthoDB" id="16211at10239"/>
<dbReference type="EvolutionaryTrace" id="P04537"/>
<dbReference type="Proteomes" id="UP000009087">
    <property type="component" value="Segment"/>
</dbReference>
<dbReference type="GO" id="GO:0003677">
    <property type="term" value="F:DNA binding"/>
    <property type="evidence" value="ECO:0007669"/>
    <property type="project" value="UniProtKB-KW"/>
</dbReference>
<dbReference type="GO" id="GO:0071897">
    <property type="term" value="P:DNA biosynthetic process"/>
    <property type="evidence" value="ECO:0007669"/>
    <property type="project" value="UniProtKB-KW"/>
</dbReference>
<dbReference type="GO" id="GO:0006310">
    <property type="term" value="P:DNA recombination"/>
    <property type="evidence" value="ECO:0007669"/>
    <property type="project" value="UniProtKB-KW"/>
</dbReference>
<dbReference type="InterPro" id="IPR021289">
    <property type="entry name" value="UvsY"/>
</dbReference>
<dbReference type="Pfam" id="PF11056">
    <property type="entry name" value="UvsY"/>
    <property type="match status" value="1"/>
</dbReference>
<feature type="chain" id="PRO_0000164989" description="Recombination protein uvsY">
    <location>
        <begin position="1"/>
        <end position="137"/>
    </location>
</feature>
<feature type="sequence conflict" description="In Ref. 1; AAA32550." evidence="5" ref="1">
    <original>A</original>
    <variation>R</variation>
    <location>
        <position position="113"/>
    </location>
</feature>
<feature type="helix" evidence="6">
    <location>
        <begin position="3"/>
        <end position="14"/>
    </location>
</feature>
<feature type="helix" evidence="6">
    <location>
        <begin position="18"/>
        <end position="20"/>
    </location>
</feature>
<feature type="helix" evidence="6">
    <location>
        <begin position="21"/>
        <end position="64"/>
    </location>
</feature>
<feature type="helix" evidence="6">
    <location>
        <begin position="80"/>
        <end position="88"/>
    </location>
</feature>
<feature type="helix" evidence="6">
    <location>
        <begin position="91"/>
        <end position="134"/>
    </location>
</feature>
<comment type="function">
    <text evidence="1 2">Plays a role in viral DNA synthesis by promoting enzymatic activities of UvsX recombinase, by promoting UvsX-ssDNA filament assembly, and by helping UvsX to displace bound gp32 from ssDNA.</text>
</comment>
<comment type="subunit">
    <text evidence="2 3 4">Homohexamer. Interacts with gp32.</text>
</comment>
<keyword id="KW-0002">3D-structure</keyword>
<keyword id="KW-0233">DNA recombination</keyword>
<keyword id="KW-0237">DNA synthesis</keyword>
<keyword id="KW-0238">DNA-binding</keyword>
<keyword id="KW-1185">Reference proteome</keyword>
<organism>
    <name type="scientific">Enterobacteria phage T4</name>
    <name type="common">Bacteriophage T4</name>
    <dbReference type="NCBI Taxonomy" id="10665"/>
    <lineage>
        <taxon>Viruses</taxon>
        <taxon>Duplodnaviria</taxon>
        <taxon>Heunggongvirae</taxon>
        <taxon>Uroviricota</taxon>
        <taxon>Caudoviricetes</taxon>
        <taxon>Straboviridae</taxon>
        <taxon>Tevenvirinae</taxon>
        <taxon>Tequatrovirus</taxon>
    </lineage>
</organism>
<accession>P04537</accession>